<gene>
    <name evidence="1" type="primary">rpmJ</name>
    <name type="ordered locus">BMEI0294</name>
</gene>
<accession>P66286</accession>
<accession>Q8YIZ3</accession>
<feature type="chain" id="PRO_0000126159" description="Large ribosomal subunit protein bL36">
    <location>
        <begin position="1"/>
        <end position="41"/>
    </location>
</feature>
<proteinExistence type="inferred from homology"/>
<name>RL36_BRUME</name>
<dbReference type="EMBL" id="AE008917">
    <property type="protein sequence ID" value="AAL51475.1"/>
    <property type="status" value="ALT_INIT"/>
    <property type="molecule type" value="Genomic_DNA"/>
</dbReference>
<dbReference type="PIR" id="AH3288">
    <property type="entry name" value="AH3288"/>
</dbReference>
<dbReference type="SMR" id="P66286"/>
<dbReference type="KEGG" id="bme:BMEI0294"/>
<dbReference type="KEGG" id="bmel:DK63_1139"/>
<dbReference type="PATRIC" id="fig|224914.52.peg.1203"/>
<dbReference type="eggNOG" id="COG0257">
    <property type="taxonomic scope" value="Bacteria"/>
</dbReference>
<dbReference type="Proteomes" id="UP000000419">
    <property type="component" value="Chromosome I"/>
</dbReference>
<dbReference type="GO" id="GO:1990904">
    <property type="term" value="C:ribonucleoprotein complex"/>
    <property type="evidence" value="ECO:0007669"/>
    <property type="project" value="UniProtKB-KW"/>
</dbReference>
<dbReference type="GO" id="GO:0005840">
    <property type="term" value="C:ribosome"/>
    <property type="evidence" value="ECO:0007669"/>
    <property type="project" value="UniProtKB-KW"/>
</dbReference>
<dbReference type="GO" id="GO:0003735">
    <property type="term" value="F:structural constituent of ribosome"/>
    <property type="evidence" value="ECO:0007669"/>
    <property type="project" value="InterPro"/>
</dbReference>
<dbReference type="GO" id="GO:0006412">
    <property type="term" value="P:translation"/>
    <property type="evidence" value="ECO:0007669"/>
    <property type="project" value="UniProtKB-UniRule"/>
</dbReference>
<dbReference type="HAMAP" id="MF_00251">
    <property type="entry name" value="Ribosomal_bL36"/>
    <property type="match status" value="1"/>
</dbReference>
<dbReference type="InterPro" id="IPR000473">
    <property type="entry name" value="Ribosomal_bL36"/>
</dbReference>
<dbReference type="InterPro" id="IPR035977">
    <property type="entry name" value="Ribosomal_bL36_sp"/>
</dbReference>
<dbReference type="InterPro" id="IPR047621">
    <property type="entry name" value="Ribosomal_L36_bact"/>
</dbReference>
<dbReference type="NCBIfam" id="NF002021">
    <property type="entry name" value="PRK00831.1"/>
    <property type="match status" value="1"/>
</dbReference>
<dbReference type="NCBIfam" id="TIGR01022">
    <property type="entry name" value="rpmJ_bact"/>
    <property type="match status" value="1"/>
</dbReference>
<dbReference type="PANTHER" id="PTHR47781">
    <property type="entry name" value="50S RIBOSOMAL PROTEIN L36 2"/>
    <property type="match status" value="1"/>
</dbReference>
<dbReference type="PANTHER" id="PTHR47781:SF1">
    <property type="entry name" value="LARGE RIBOSOMAL SUBUNIT PROTEIN BL36B"/>
    <property type="match status" value="1"/>
</dbReference>
<dbReference type="Pfam" id="PF00444">
    <property type="entry name" value="Ribosomal_L36"/>
    <property type="match status" value="1"/>
</dbReference>
<dbReference type="SUPFAM" id="SSF57840">
    <property type="entry name" value="Ribosomal protein L36"/>
    <property type="match status" value="1"/>
</dbReference>
<dbReference type="PROSITE" id="PS00828">
    <property type="entry name" value="RIBOSOMAL_L36"/>
    <property type="match status" value="1"/>
</dbReference>
<protein>
    <recommendedName>
        <fullName evidence="1">Large ribosomal subunit protein bL36</fullName>
    </recommendedName>
    <alternativeName>
        <fullName evidence="2">50S ribosomal protein L36</fullName>
    </alternativeName>
</protein>
<evidence type="ECO:0000255" key="1">
    <source>
        <dbReference type="HAMAP-Rule" id="MF_00251"/>
    </source>
</evidence>
<evidence type="ECO:0000305" key="2"/>
<sequence>MKIKNSLKALKARHRDCQLVRRKGRVYIINKTAPRFKARQG</sequence>
<organism>
    <name type="scientific">Brucella melitensis biotype 1 (strain ATCC 23456 / CCUG 17765 / NCTC 10094 / 16M)</name>
    <dbReference type="NCBI Taxonomy" id="224914"/>
    <lineage>
        <taxon>Bacteria</taxon>
        <taxon>Pseudomonadati</taxon>
        <taxon>Pseudomonadota</taxon>
        <taxon>Alphaproteobacteria</taxon>
        <taxon>Hyphomicrobiales</taxon>
        <taxon>Brucellaceae</taxon>
        <taxon>Brucella/Ochrobactrum group</taxon>
        <taxon>Brucella</taxon>
    </lineage>
</organism>
<keyword id="KW-0687">Ribonucleoprotein</keyword>
<keyword id="KW-0689">Ribosomal protein</keyword>
<comment type="similarity">
    <text evidence="1">Belongs to the bacterial ribosomal protein bL36 family.</text>
</comment>
<comment type="sequence caution" evidence="2">
    <conflict type="erroneous initiation">
        <sequence resource="EMBL-CDS" id="AAL51475"/>
    </conflict>
</comment>
<reference key="1">
    <citation type="journal article" date="2002" name="Proc. Natl. Acad. Sci. U.S.A.">
        <title>The genome sequence of the facultative intracellular pathogen Brucella melitensis.</title>
        <authorList>
            <person name="DelVecchio V.G."/>
            <person name="Kapatral V."/>
            <person name="Redkar R.J."/>
            <person name="Patra G."/>
            <person name="Mujer C."/>
            <person name="Los T."/>
            <person name="Ivanova N."/>
            <person name="Anderson I."/>
            <person name="Bhattacharyya A."/>
            <person name="Lykidis A."/>
            <person name="Reznik G."/>
            <person name="Jablonski L."/>
            <person name="Larsen N."/>
            <person name="D'Souza M."/>
            <person name="Bernal A."/>
            <person name="Mazur M."/>
            <person name="Goltsman E."/>
            <person name="Selkov E."/>
            <person name="Elzer P.H."/>
            <person name="Hagius S."/>
            <person name="O'Callaghan D."/>
            <person name="Letesson J.-J."/>
            <person name="Haselkorn R."/>
            <person name="Kyrpides N.C."/>
            <person name="Overbeek R."/>
        </authorList>
    </citation>
    <scope>NUCLEOTIDE SEQUENCE [LARGE SCALE GENOMIC DNA]</scope>
    <source>
        <strain>ATCC 23456 / CCUG 17765 / NCTC 10094 / 16M</strain>
    </source>
</reference>